<keyword id="KW-0963">Cytoplasm</keyword>
<keyword id="KW-0269">Exonuclease</keyword>
<keyword id="KW-0378">Hydrolase</keyword>
<keyword id="KW-0540">Nuclease</keyword>
<name>EX7L_BRUA1</name>
<comment type="function">
    <text evidence="1">Bidirectionally degrades single-stranded DNA into large acid-insoluble oligonucleotides, which are then degraded further into small acid-soluble oligonucleotides.</text>
</comment>
<comment type="catalytic activity">
    <reaction evidence="1">
        <text>Exonucleolytic cleavage in either 5'- to 3'- or 3'- to 5'-direction to yield nucleoside 5'-phosphates.</text>
        <dbReference type="EC" id="3.1.11.6"/>
    </reaction>
</comment>
<comment type="subunit">
    <text evidence="1">Heterooligomer composed of large and small subunits.</text>
</comment>
<comment type="subcellular location">
    <subcellularLocation>
        <location evidence="1">Cytoplasm</location>
    </subcellularLocation>
</comment>
<comment type="similarity">
    <text evidence="1">Belongs to the XseA family.</text>
</comment>
<reference key="1">
    <citation type="journal article" date="2008" name="PLoS ONE">
        <title>Genome sequence of Brucella abortus vaccine strain S19 compared to virulent strains yields candidate virulence genes.</title>
        <authorList>
            <person name="Crasta O.R."/>
            <person name="Folkerts O."/>
            <person name="Fei Z."/>
            <person name="Mane S.P."/>
            <person name="Evans C."/>
            <person name="Martino-Catt S."/>
            <person name="Bricker B."/>
            <person name="Yu G."/>
            <person name="Du L."/>
            <person name="Sobral B.W."/>
        </authorList>
    </citation>
    <scope>NUCLEOTIDE SEQUENCE [LARGE SCALE GENOMIC DNA]</scope>
    <source>
        <strain>S19</strain>
    </source>
</reference>
<organism>
    <name type="scientific">Brucella abortus (strain S19)</name>
    <dbReference type="NCBI Taxonomy" id="430066"/>
    <lineage>
        <taxon>Bacteria</taxon>
        <taxon>Pseudomonadati</taxon>
        <taxon>Pseudomonadota</taxon>
        <taxon>Alphaproteobacteria</taxon>
        <taxon>Hyphomicrobiales</taxon>
        <taxon>Brucellaceae</taxon>
        <taxon>Brucella/Ochrobactrum group</taxon>
        <taxon>Brucella</taxon>
    </lineage>
</organism>
<protein>
    <recommendedName>
        <fullName evidence="1">Exodeoxyribonuclease 7 large subunit</fullName>
        <ecNumber evidence="1">3.1.11.6</ecNumber>
    </recommendedName>
    <alternativeName>
        <fullName evidence="1">Exodeoxyribonuclease VII large subunit</fullName>
        <shortName evidence="1">Exonuclease VII large subunit</shortName>
    </alternativeName>
</protein>
<gene>
    <name evidence="1" type="primary">xseA</name>
    <name type="ordered locus">BAbS19_II04490</name>
</gene>
<evidence type="ECO:0000255" key="1">
    <source>
        <dbReference type="HAMAP-Rule" id="MF_00378"/>
    </source>
</evidence>
<proteinExistence type="inferred from homology"/>
<accession>B2SAR1</accession>
<dbReference type="EC" id="3.1.11.6" evidence="1"/>
<dbReference type="EMBL" id="CP000888">
    <property type="protein sequence ID" value="ACD73948.1"/>
    <property type="molecule type" value="Genomic_DNA"/>
</dbReference>
<dbReference type="SMR" id="B2SAR1"/>
<dbReference type="KEGG" id="bmc:BAbS19_II04490"/>
<dbReference type="HOGENOM" id="CLU_023625_3_1_5"/>
<dbReference type="Proteomes" id="UP000002565">
    <property type="component" value="Chromosome 2"/>
</dbReference>
<dbReference type="GO" id="GO:0005737">
    <property type="term" value="C:cytoplasm"/>
    <property type="evidence" value="ECO:0007669"/>
    <property type="project" value="UniProtKB-SubCell"/>
</dbReference>
<dbReference type="GO" id="GO:0009318">
    <property type="term" value="C:exodeoxyribonuclease VII complex"/>
    <property type="evidence" value="ECO:0007669"/>
    <property type="project" value="InterPro"/>
</dbReference>
<dbReference type="GO" id="GO:0008855">
    <property type="term" value="F:exodeoxyribonuclease VII activity"/>
    <property type="evidence" value="ECO:0007669"/>
    <property type="project" value="UniProtKB-UniRule"/>
</dbReference>
<dbReference type="GO" id="GO:0003676">
    <property type="term" value="F:nucleic acid binding"/>
    <property type="evidence" value="ECO:0007669"/>
    <property type="project" value="InterPro"/>
</dbReference>
<dbReference type="GO" id="GO:0006308">
    <property type="term" value="P:DNA catabolic process"/>
    <property type="evidence" value="ECO:0007669"/>
    <property type="project" value="UniProtKB-UniRule"/>
</dbReference>
<dbReference type="CDD" id="cd04489">
    <property type="entry name" value="ExoVII_LU_OBF"/>
    <property type="match status" value="1"/>
</dbReference>
<dbReference type="HAMAP" id="MF_00378">
    <property type="entry name" value="Exonuc_7_L"/>
    <property type="match status" value="1"/>
</dbReference>
<dbReference type="InterPro" id="IPR003753">
    <property type="entry name" value="Exonuc_VII_L"/>
</dbReference>
<dbReference type="InterPro" id="IPR020579">
    <property type="entry name" value="Exonuc_VII_lsu_C"/>
</dbReference>
<dbReference type="InterPro" id="IPR025824">
    <property type="entry name" value="OB-fold_nuc-bd_dom"/>
</dbReference>
<dbReference type="NCBIfam" id="TIGR00237">
    <property type="entry name" value="xseA"/>
    <property type="match status" value="1"/>
</dbReference>
<dbReference type="PANTHER" id="PTHR30008">
    <property type="entry name" value="EXODEOXYRIBONUCLEASE 7 LARGE SUBUNIT"/>
    <property type="match status" value="1"/>
</dbReference>
<dbReference type="PANTHER" id="PTHR30008:SF0">
    <property type="entry name" value="EXODEOXYRIBONUCLEASE 7 LARGE SUBUNIT"/>
    <property type="match status" value="1"/>
</dbReference>
<dbReference type="Pfam" id="PF02601">
    <property type="entry name" value="Exonuc_VII_L"/>
    <property type="match status" value="1"/>
</dbReference>
<dbReference type="Pfam" id="PF13742">
    <property type="entry name" value="tRNA_anti_2"/>
    <property type="match status" value="1"/>
</dbReference>
<sequence length="511" mass="56363">MASDSSFPGASSNVAEYSVSEISGALKRTVEDTFGHVRVRGEISGYRGPHSSGHAYFALKDDRARLEAVIWRGSMSRLRFRPEEGMEVIATGKLTTYPGSSKYQIVIEQMEPAGAGALMALLEERKQRLAAEGLFDPTLKQLLPFMPRVIGVVTSPTGAVIRDIIHRISDRYPLRVIVWPVRVQGDTCGPEVATAVNGFNTLPDDGPIPRPDVLIVARGGGSLEDLWGFNDEIVVRAVAASHIPVISAVGHETDWTLIDLAADMRAPTPTGAAEMAVPVKADLQASLASQSARLSSAMSRFFDQKRQAHRAAARAMPSADQLLALPRRRFDEAASRLTRALFVNTQKKRVHFDGHARQLSPRLLQRRLVELERGVTMLGQRLPRALEAFLRERRTAFTHRANRLSPEPILRRTRLTGSTLEQLDRRRDQAVRLLIERVKRRSQELDRLMRTLSYESVLERGFAVVFDAQGKPVKQAAAVSPGDALSVRFRDGDVGVVARAGLTIPDPTKGQ</sequence>
<feature type="chain" id="PRO_1000122045" description="Exodeoxyribonuclease 7 large subunit">
    <location>
        <begin position="1"/>
        <end position="511"/>
    </location>
</feature>